<comment type="disruption phenotype">
    <text evidence="1">Deletion confers sensitivity to citric acid.</text>
</comment>
<gene>
    <name type="ordered locus">YKL102C</name>
    <name type="ORF">YKL454</name>
</gene>
<evidence type="ECO:0000269" key="1">
    <source>
    </source>
</evidence>
<keyword id="KW-1185">Reference proteome</keyword>
<name>YKK2_YEAST</name>
<protein>
    <recommendedName>
        <fullName>Uncharacterized protein YKL102C</fullName>
    </recommendedName>
</protein>
<dbReference type="EMBL" id="X71133">
    <property type="protein sequence ID" value="CAA50455.1"/>
    <property type="molecule type" value="Genomic_DNA"/>
</dbReference>
<dbReference type="EMBL" id="Z28102">
    <property type="protein sequence ID" value="CAA81942.1"/>
    <property type="molecule type" value="Genomic_DNA"/>
</dbReference>
<dbReference type="EMBL" id="BK006944">
    <property type="protein sequence ID" value="DAA80309.1"/>
    <property type="molecule type" value="Genomic_DNA"/>
</dbReference>
<dbReference type="PIR" id="S37929">
    <property type="entry name" value="S37929"/>
</dbReference>
<dbReference type="RefSeq" id="NP_001335789.1">
    <property type="nucleotide sequence ID" value="NM_001348849.1"/>
</dbReference>
<dbReference type="DIP" id="DIP-5040N"/>
<dbReference type="FunCoup" id="P34249">
    <property type="interactions" value="26"/>
</dbReference>
<dbReference type="IntAct" id="P34249">
    <property type="interactions" value="1"/>
</dbReference>
<dbReference type="STRING" id="4932.YKL102C"/>
<dbReference type="PaxDb" id="4932-YKL102C"/>
<dbReference type="EnsemblFungi" id="YKL102C_mRNA">
    <property type="protein sequence ID" value="YKL102C"/>
    <property type="gene ID" value="YKL102C"/>
</dbReference>
<dbReference type="GeneID" id="853759"/>
<dbReference type="AGR" id="SGD:S000001585"/>
<dbReference type="SGD" id="S000001585">
    <property type="gene designation" value="YKL102C"/>
</dbReference>
<dbReference type="HOGENOM" id="CLU_2293902_0_0_1"/>
<dbReference type="InParanoid" id="P34249"/>
<dbReference type="PRO" id="PR:P34249"/>
<dbReference type="Proteomes" id="UP000002311">
    <property type="component" value="Chromosome XI"/>
</dbReference>
<dbReference type="RNAct" id="P34249">
    <property type="molecule type" value="protein"/>
</dbReference>
<sequence>MCALFAEVSSTAAASCSFGVLLCSGSNCGRLVGSERRKVLYVFNVNVCKKMSSYYFLRHDNIVIPYLLRLLVSDKEASNKNPLLPFLMDKERSHHFVRNMN</sequence>
<feature type="chain" id="PRO_0000203160" description="Uncharacterized protein YKL102C">
    <location>
        <begin position="1"/>
        <end position="101"/>
    </location>
</feature>
<reference key="1">
    <citation type="journal article" date="1993" name="Yeast">
        <title>The DNA sequence analysis of the HAP4-LAP4 region on chromosome XI of Saccharomyces cerevisiae suggests the presence of a second aspartate aminotransferase gene in yeast.</title>
        <authorList>
            <person name="Cheret G."/>
            <person name="Pallier C."/>
            <person name="Valens M."/>
            <person name="Daignan-Fornier B."/>
            <person name="Fukuhara H."/>
            <person name="Bolotin-Fukuhara M."/>
            <person name="Sor F."/>
        </authorList>
    </citation>
    <scope>NUCLEOTIDE SEQUENCE [GENOMIC DNA]</scope>
    <source>
        <strain>ATCC 204508 / S288c</strain>
    </source>
</reference>
<reference key="2">
    <citation type="journal article" date="1994" name="Nature">
        <title>Complete DNA sequence of yeast chromosome XI.</title>
        <authorList>
            <person name="Dujon B."/>
            <person name="Alexandraki D."/>
            <person name="Andre B."/>
            <person name="Ansorge W."/>
            <person name="Baladron V."/>
            <person name="Ballesta J.P.G."/>
            <person name="Banrevi A."/>
            <person name="Bolle P.-A."/>
            <person name="Bolotin-Fukuhara M."/>
            <person name="Bossier P."/>
            <person name="Bou G."/>
            <person name="Boyer J."/>
            <person name="Buitrago M.J."/>
            <person name="Cheret G."/>
            <person name="Colleaux L."/>
            <person name="Daignan-Fornier B."/>
            <person name="del Rey F."/>
            <person name="Dion C."/>
            <person name="Domdey H."/>
            <person name="Duesterhoeft A."/>
            <person name="Duesterhus S."/>
            <person name="Entian K.-D."/>
            <person name="Erfle H."/>
            <person name="Esteban P.F."/>
            <person name="Feldmann H."/>
            <person name="Fernandes L."/>
            <person name="Fobo G.M."/>
            <person name="Fritz C."/>
            <person name="Fukuhara H."/>
            <person name="Gabel C."/>
            <person name="Gaillon L."/>
            <person name="Garcia-Cantalejo J.M."/>
            <person name="Garcia-Ramirez J.J."/>
            <person name="Gent M.E."/>
            <person name="Ghazvini M."/>
            <person name="Goffeau A."/>
            <person name="Gonzalez A."/>
            <person name="Grothues D."/>
            <person name="Guerreiro P."/>
            <person name="Hegemann J.H."/>
            <person name="Hewitt N."/>
            <person name="Hilger F."/>
            <person name="Hollenberg C.P."/>
            <person name="Horaitis O."/>
            <person name="Indge K.J."/>
            <person name="Jacquier A."/>
            <person name="James C.M."/>
            <person name="Jauniaux J.-C."/>
            <person name="Jimenez A."/>
            <person name="Keuchel H."/>
            <person name="Kirchrath L."/>
            <person name="Kleine K."/>
            <person name="Koetter P."/>
            <person name="Legrain P."/>
            <person name="Liebl S."/>
            <person name="Louis E.J."/>
            <person name="Maia e Silva A."/>
            <person name="Marck C."/>
            <person name="Monnier A.-L."/>
            <person name="Moestl D."/>
            <person name="Mueller S."/>
            <person name="Obermaier B."/>
            <person name="Oliver S.G."/>
            <person name="Pallier C."/>
            <person name="Pascolo S."/>
            <person name="Pfeiffer F."/>
            <person name="Philippsen P."/>
            <person name="Planta R.J."/>
            <person name="Pohl F.M."/>
            <person name="Pohl T.M."/>
            <person name="Poehlmann R."/>
            <person name="Portetelle D."/>
            <person name="Purnelle B."/>
            <person name="Puzos V."/>
            <person name="Ramezani Rad M."/>
            <person name="Rasmussen S.W."/>
            <person name="Remacha M.A."/>
            <person name="Revuelta J.L."/>
            <person name="Richard G.-F."/>
            <person name="Rieger M."/>
            <person name="Rodrigues-Pousada C."/>
            <person name="Rose M."/>
            <person name="Rupp T."/>
            <person name="Santos M.A."/>
            <person name="Schwager C."/>
            <person name="Sensen C."/>
            <person name="Skala J."/>
            <person name="Soares H."/>
            <person name="Sor F."/>
            <person name="Stegemann J."/>
            <person name="Tettelin H."/>
            <person name="Thierry A."/>
            <person name="Tzermia M."/>
            <person name="Urrestarazu L.A."/>
            <person name="van Dyck L."/>
            <person name="van Vliet-Reedijk J.C."/>
            <person name="Valens M."/>
            <person name="Vandenbol M."/>
            <person name="Vilela C."/>
            <person name="Vissers S."/>
            <person name="von Wettstein D."/>
            <person name="Voss H."/>
            <person name="Wiemann S."/>
            <person name="Xu G."/>
            <person name="Zimmermann J."/>
            <person name="Haasemann M."/>
            <person name="Becker I."/>
            <person name="Mewes H.-W."/>
        </authorList>
    </citation>
    <scope>NUCLEOTIDE SEQUENCE [LARGE SCALE GENOMIC DNA]</scope>
    <source>
        <strain>ATCC 204508 / S288c</strain>
    </source>
</reference>
<reference key="3">
    <citation type="journal article" date="2014" name="G3 (Bethesda)">
        <title>The reference genome sequence of Saccharomyces cerevisiae: Then and now.</title>
        <authorList>
            <person name="Engel S.R."/>
            <person name="Dietrich F.S."/>
            <person name="Fisk D.G."/>
            <person name="Binkley G."/>
            <person name="Balakrishnan R."/>
            <person name="Costanzo M.C."/>
            <person name="Dwight S.S."/>
            <person name="Hitz B.C."/>
            <person name="Karra K."/>
            <person name="Nash R.S."/>
            <person name="Weng S."/>
            <person name="Wong E.D."/>
            <person name="Lloyd P."/>
            <person name="Skrzypek M.S."/>
            <person name="Miyasato S.R."/>
            <person name="Simison M."/>
            <person name="Cherry J.M."/>
        </authorList>
    </citation>
    <scope>GENOME REANNOTATION</scope>
    <source>
        <strain>ATCC 204508 / S288c</strain>
    </source>
</reference>
<reference key="4">
    <citation type="journal article" date="2004" name="Mol. Cell. Biol.">
        <title>Evidence of a new role for the high-osmolarity glycerol mitogen-activated protein kinase pathway in yeast: regulating adaptation to citric acid stress.</title>
        <authorList>
            <person name="Lawrence C.L."/>
            <person name="Botting C.H."/>
            <person name="Antrobus R."/>
            <person name="Coote P.J."/>
        </authorList>
    </citation>
    <scope>DISRUPTION PHENOTYPE</scope>
</reference>
<accession>P34249</accession>
<accession>A0A1S0T092</accession>
<proteinExistence type="predicted"/>
<organism>
    <name type="scientific">Saccharomyces cerevisiae (strain ATCC 204508 / S288c)</name>
    <name type="common">Baker's yeast</name>
    <dbReference type="NCBI Taxonomy" id="559292"/>
    <lineage>
        <taxon>Eukaryota</taxon>
        <taxon>Fungi</taxon>
        <taxon>Dikarya</taxon>
        <taxon>Ascomycota</taxon>
        <taxon>Saccharomycotina</taxon>
        <taxon>Saccharomycetes</taxon>
        <taxon>Saccharomycetales</taxon>
        <taxon>Saccharomycetaceae</taxon>
        <taxon>Saccharomyces</taxon>
    </lineage>
</organism>